<evidence type="ECO:0000255" key="1">
    <source>
        <dbReference type="HAMAP-Rule" id="MF_01249"/>
    </source>
</evidence>
<name>HPRK_CALS4</name>
<sequence>MEKVSVETLIKDLNLEVIVKAENNKIDITTSDVNRPGLQFAGFYEHFAYERVQIMGKVETTFVEQLPDEVLAERADKFFAYPIPCLIVTRDLNIRQEIIEAAKKHDRYLLRTKEASTKFINRLINYLDEKLAPQITIHGNLVDVYGIGVLLLGESGIGKSETALELVKRGHRLVADDAVEIRKIGEDKLQGSAPEIIRHFIEIRGIGILDVKTLYGVGSVRNSMSIDLVIQLEEWDEDKYYDRLGLEDEYIKFLDVEVPKLTIPVRPGRNLAIIVEVAAMNHRQKQMGYNAAHELNKKLLKQIGN</sequence>
<protein>
    <recommendedName>
        <fullName evidence="1">HPr kinase/phosphorylase</fullName>
        <shortName evidence="1">HPrK/P</shortName>
        <ecNumber evidence="1">2.7.11.-</ecNumber>
        <ecNumber evidence="1">2.7.4.-</ecNumber>
    </recommendedName>
    <alternativeName>
        <fullName evidence="1">HPr(Ser) kinase/phosphorylase</fullName>
    </alternativeName>
</protein>
<feature type="chain" id="PRO_0000059003" description="HPr kinase/phosphorylase">
    <location>
        <begin position="1"/>
        <end position="305"/>
    </location>
</feature>
<feature type="region of interest" description="Important for the catalytic mechanism of both phosphorylation and dephosphorylation" evidence="1">
    <location>
        <begin position="201"/>
        <end position="210"/>
    </location>
</feature>
<feature type="region of interest" description="Important for the catalytic mechanism of dephosphorylation" evidence="1">
    <location>
        <begin position="264"/>
        <end position="269"/>
    </location>
</feature>
<feature type="active site" evidence="1">
    <location>
        <position position="138"/>
    </location>
</feature>
<feature type="active site" evidence="1">
    <location>
        <position position="159"/>
    </location>
</feature>
<feature type="active site" description="Proton acceptor; for phosphorylation activity. Proton donor; for dephosphorylation activity" evidence="1">
    <location>
        <position position="177"/>
    </location>
</feature>
<feature type="active site" evidence="1">
    <location>
        <position position="243"/>
    </location>
</feature>
<feature type="binding site" evidence="1">
    <location>
        <begin position="153"/>
        <end position="160"/>
    </location>
    <ligand>
        <name>ATP</name>
        <dbReference type="ChEBI" id="CHEBI:30616"/>
    </ligand>
</feature>
<feature type="binding site" evidence="1">
    <location>
        <position position="160"/>
    </location>
    <ligand>
        <name>Mg(2+)</name>
        <dbReference type="ChEBI" id="CHEBI:18420"/>
    </ligand>
</feature>
<feature type="binding site" evidence="1">
    <location>
        <position position="202"/>
    </location>
    <ligand>
        <name>Mg(2+)</name>
        <dbReference type="ChEBI" id="CHEBI:18420"/>
    </ligand>
</feature>
<gene>
    <name evidence="1" type="primary">hprK</name>
    <name type="ordered locus">TTE1964</name>
</gene>
<comment type="function">
    <text evidence="1">Catalyzes the ATP- as well as the pyrophosphate-dependent phosphorylation of a specific serine residue in HPr, a phosphocarrier protein of the phosphoenolpyruvate-dependent sugar phosphotransferase system (PTS). HprK/P also catalyzes the pyrophosphate-producing, inorganic phosphate-dependent dephosphorylation (phosphorolysis) of seryl-phosphorylated HPr (P-Ser-HPr). The two antagonistic activities of HprK/P are regulated by several intracellular metabolites, which change their concentration in response to the absence or presence of rapidly metabolisable carbon sources (glucose, fructose, etc.) in the growth medium. Therefore, by controlling the phosphorylation state of HPr, HPrK/P is a sensor enzyme that plays a major role in the regulation of carbon metabolism and sugar transport: it mediates carbon catabolite repression (CCR), and regulates PTS-catalyzed carbohydrate uptake and inducer exclusion.</text>
</comment>
<comment type="catalytic activity">
    <reaction evidence="1">
        <text>[HPr protein]-L-serine + ATP = [HPr protein]-O-phospho-L-serine + ADP + H(+)</text>
        <dbReference type="Rhea" id="RHEA:46600"/>
        <dbReference type="Rhea" id="RHEA-COMP:11602"/>
        <dbReference type="Rhea" id="RHEA-COMP:11603"/>
        <dbReference type="ChEBI" id="CHEBI:15378"/>
        <dbReference type="ChEBI" id="CHEBI:29999"/>
        <dbReference type="ChEBI" id="CHEBI:30616"/>
        <dbReference type="ChEBI" id="CHEBI:83421"/>
        <dbReference type="ChEBI" id="CHEBI:456216"/>
    </reaction>
</comment>
<comment type="catalytic activity">
    <reaction evidence="1">
        <text>[HPr protein]-O-phospho-L-serine + phosphate + H(+) = [HPr protein]-L-serine + diphosphate</text>
        <dbReference type="Rhea" id="RHEA:46604"/>
        <dbReference type="Rhea" id="RHEA-COMP:11602"/>
        <dbReference type="Rhea" id="RHEA-COMP:11603"/>
        <dbReference type="ChEBI" id="CHEBI:15378"/>
        <dbReference type="ChEBI" id="CHEBI:29999"/>
        <dbReference type="ChEBI" id="CHEBI:33019"/>
        <dbReference type="ChEBI" id="CHEBI:43474"/>
        <dbReference type="ChEBI" id="CHEBI:83421"/>
    </reaction>
</comment>
<comment type="cofactor">
    <cofactor evidence="1">
        <name>Mg(2+)</name>
        <dbReference type="ChEBI" id="CHEBI:18420"/>
    </cofactor>
</comment>
<comment type="subunit">
    <text evidence="1">Homohexamer.</text>
</comment>
<comment type="domain">
    <text evidence="1">The Walker A ATP-binding motif also binds Pi and PPi.</text>
</comment>
<comment type="miscellaneous">
    <text evidence="1">Both phosphorylation and phosphorolysis are carried out by the same active site and suggest a common mechanism for both reactions.</text>
</comment>
<comment type="similarity">
    <text evidence="1">Belongs to the HPrK/P family.</text>
</comment>
<reference key="1">
    <citation type="journal article" date="2002" name="Genome Res.">
        <title>A complete sequence of the T. tengcongensis genome.</title>
        <authorList>
            <person name="Bao Q."/>
            <person name="Tian Y."/>
            <person name="Li W."/>
            <person name="Xu Z."/>
            <person name="Xuan Z."/>
            <person name="Hu S."/>
            <person name="Dong W."/>
            <person name="Yang J."/>
            <person name="Chen Y."/>
            <person name="Xue Y."/>
            <person name="Xu Y."/>
            <person name="Lai X."/>
            <person name="Huang L."/>
            <person name="Dong X."/>
            <person name="Ma Y."/>
            <person name="Ling L."/>
            <person name="Tan H."/>
            <person name="Chen R."/>
            <person name="Wang J."/>
            <person name="Yu J."/>
            <person name="Yang H."/>
        </authorList>
    </citation>
    <scope>NUCLEOTIDE SEQUENCE [LARGE SCALE GENOMIC DNA]</scope>
    <source>
        <strain>DSM 15242 / JCM 11007 / NBRC 100824 / MB4</strain>
    </source>
</reference>
<keyword id="KW-0067">ATP-binding</keyword>
<keyword id="KW-0119">Carbohydrate metabolism</keyword>
<keyword id="KW-0418">Kinase</keyword>
<keyword id="KW-0460">Magnesium</keyword>
<keyword id="KW-0479">Metal-binding</keyword>
<keyword id="KW-0511">Multifunctional enzyme</keyword>
<keyword id="KW-0547">Nucleotide-binding</keyword>
<keyword id="KW-1185">Reference proteome</keyword>
<keyword id="KW-0723">Serine/threonine-protein kinase</keyword>
<keyword id="KW-0808">Transferase</keyword>
<organism>
    <name type="scientific">Caldanaerobacter subterraneus subsp. tengcongensis (strain DSM 15242 / JCM 11007 / NBRC 100824 / MB4)</name>
    <name type="common">Thermoanaerobacter tengcongensis</name>
    <dbReference type="NCBI Taxonomy" id="273068"/>
    <lineage>
        <taxon>Bacteria</taxon>
        <taxon>Bacillati</taxon>
        <taxon>Bacillota</taxon>
        <taxon>Clostridia</taxon>
        <taxon>Thermoanaerobacterales</taxon>
        <taxon>Thermoanaerobacteraceae</taxon>
        <taxon>Caldanaerobacter</taxon>
    </lineage>
</organism>
<dbReference type="EC" id="2.7.11.-" evidence="1"/>
<dbReference type="EC" id="2.7.4.-" evidence="1"/>
<dbReference type="EMBL" id="AE008691">
    <property type="protein sequence ID" value="AAM25143.1"/>
    <property type="molecule type" value="Genomic_DNA"/>
</dbReference>
<dbReference type="RefSeq" id="WP_009609945.1">
    <property type="nucleotide sequence ID" value="NC_003869.1"/>
</dbReference>
<dbReference type="SMR" id="Q8R8N1"/>
<dbReference type="STRING" id="273068.TTE1964"/>
<dbReference type="KEGG" id="tte:TTE1964"/>
<dbReference type="eggNOG" id="COG1493">
    <property type="taxonomic scope" value="Bacteria"/>
</dbReference>
<dbReference type="HOGENOM" id="CLU_052030_0_1_9"/>
<dbReference type="OrthoDB" id="9778803at2"/>
<dbReference type="Proteomes" id="UP000000555">
    <property type="component" value="Chromosome"/>
</dbReference>
<dbReference type="GO" id="GO:0005524">
    <property type="term" value="F:ATP binding"/>
    <property type="evidence" value="ECO:0007669"/>
    <property type="project" value="UniProtKB-UniRule"/>
</dbReference>
<dbReference type="GO" id="GO:0000287">
    <property type="term" value="F:magnesium ion binding"/>
    <property type="evidence" value="ECO:0007669"/>
    <property type="project" value="UniProtKB-UniRule"/>
</dbReference>
<dbReference type="GO" id="GO:0000155">
    <property type="term" value="F:phosphorelay sensor kinase activity"/>
    <property type="evidence" value="ECO:0007669"/>
    <property type="project" value="InterPro"/>
</dbReference>
<dbReference type="GO" id="GO:0004674">
    <property type="term" value="F:protein serine/threonine kinase activity"/>
    <property type="evidence" value="ECO:0007669"/>
    <property type="project" value="UniProtKB-KW"/>
</dbReference>
<dbReference type="GO" id="GO:0004712">
    <property type="term" value="F:protein serine/threonine/tyrosine kinase activity"/>
    <property type="evidence" value="ECO:0007669"/>
    <property type="project" value="UniProtKB-UniRule"/>
</dbReference>
<dbReference type="GO" id="GO:0006109">
    <property type="term" value="P:regulation of carbohydrate metabolic process"/>
    <property type="evidence" value="ECO:0007669"/>
    <property type="project" value="UniProtKB-UniRule"/>
</dbReference>
<dbReference type="CDD" id="cd01918">
    <property type="entry name" value="HprK_C"/>
    <property type="match status" value="1"/>
</dbReference>
<dbReference type="FunFam" id="3.40.50.300:FF:000174">
    <property type="entry name" value="HPr kinase/phosphorylase"/>
    <property type="match status" value="1"/>
</dbReference>
<dbReference type="Gene3D" id="3.40.1390.20">
    <property type="entry name" value="HprK N-terminal domain-like"/>
    <property type="match status" value="1"/>
</dbReference>
<dbReference type="Gene3D" id="3.40.50.300">
    <property type="entry name" value="P-loop containing nucleotide triphosphate hydrolases"/>
    <property type="match status" value="1"/>
</dbReference>
<dbReference type="HAMAP" id="MF_01249">
    <property type="entry name" value="HPr_kinase"/>
    <property type="match status" value="1"/>
</dbReference>
<dbReference type="InterPro" id="IPR003755">
    <property type="entry name" value="HPr(Ser)_kin/Pase"/>
</dbReference>
<dbReference type="InterPro" id="IPR011104">
    <property type="entry name" value="Hpr_kin/Pase_C"/>
</dbReference>
<dbReference type="InterPro" id="IPR011126">
    <property type="entry name" value="Hpr_kin/Pase_Hpr_N"/>
</dbReference>
<dbReference type="InterPro" id="IPR027417">
    <property type="entry name" value="P-loop_NTPase"/>
</dbReference>
<dbReference type="InterPro" id="IPR028979">
    <property type="entry name" value="Ser_kin/Pase_Hpr-like_N_sf"/>
</dbReference>
<dbReference type="NCBIfam" id="TIGR00679">
    <property type="entry name" value="hpr-ser"/>
    <property type="match status" value="1"/>
</dbReference>
<dbReference type="PANTHER" id="PTHR30305:SF1">
    <property type="entry name" value="HPR KINASE_PHOSPHORYLASE"/>
    <property type="match status" value="1"/>
</dbReference>
<dbReference type="PANTHER" id="PTHR30305">
    <property type="entry name" value="PROTEIN YJDM-RELATED"/>
    <property type="match status" value="1"/>
</dbReference>
<dbReference type="Pfam" id="PF07475">
    <property type="entry name" value="Hpr_kinase_C"/>
    <property type="match status" value="1"/>
</dbReference>
<dbReference type="Pfam" id="PF02603">
    <property type="entry name" value="Hpr_kinase_N"/>
    <property type="match status" value="1"/>
</dbReference>
<dbReference type="SUPFAM" id="SSF75138">
    <property type="entry name" value="HprK N-terminal domain-like"/>
    <property type="match status" value="1"/>
</dbReference>
<dbReference type="SUPFAM" id="SSF53795">
    <property type="entry name" value="PEP carboxykinase-like"/>
    <property type="match status" value="1"/>
</dbReference>
<accession>Q8R8N1</accession>
<proteinExistence type="inferred from homology"/>